<name>TAM_MYCTO</name>
<organism>
    <name type="scientific">Mycobacterium tuberculosis (strain CDC 1551 / Oshkosh)</name>
    <dbReference type="NCBI Taxonomy" id="83331"/>
    <lineage>
        <taxon>Bacteria</taxon>
        <taxon>Bacillati</taxon>
        <taxon>Actinomycetota</taxon>
        <taxon>Actinomycetes</taxon>
        <taxon>Mycobacteriales</taxon>
        <taxon>Mycobacteriaceae</taxon>
        <taxon>Mycobacterium</taxon>
        <taxon>Mycobacterium tuberculosis complex</taxon>
    </lineage>
</organism>
<gene>
    <name evidence="1" type="primary">tam</name>
    <name type="ordered locus">MT0307</name>
</gene>
<comment type="function">
    <text evidence="1">Catalyzes the S-adenosylmethionine monomethyl esterification of trans-aconitate.</text>
</comment>
<comment type="catalytic activity">
    <reaction evidence="1">
        <text>trans-aconitate + S-adenosyl-L-methionine = (E)-3-(methoxycarbonyl)pent-2-enedioate + S-adenosyl-L-homocysteine</text>
        <dbReference type="Rhea" id="RHEA:14969"/>
        <dbReference type="ChEBI" id="CHEBI:15708"/>
        <dbReference type="ChEBI" id="CHEBI:57470"/>
        <dbReference type="ChEBI" id="CHEBI:57856"/>
        <dbReference type="ChEBI" id="CHEBI:59789"/>
        <dbReference type="EC" id="2.1.1.144"/>
    </reaction>
</comment>
<comment type="subcellular location">
    <subcellularLocation>
        <location evidence="1">Cytoplasm</location>
    </subcellularLocation>
</comment>
<comment type="similarity">
    <text evidence="1">Belongs to the methyltransferase superfamily. Tam family.</text>
</comment>
<protein>
    <recommendedName>
        <fullName>Probable trans-aconitate 2-methyltransferase</fullName>
        <ecNumber evidence="1">2.1.1.144</ecNumber>
    </recommendedName>
</protein>
<feature type="chain" id="PRO_0000428397" description="Probable trans-aconitate 2-methyltransferase">
    <location>
        <begin position="1"/>
        <end position="261"/>
    </location>
</feature>
<keyword id="KW-0963">Cytoplasm</keyword>
<keyword id="KW-0489">Methyltransferase</keyword>
<keyword id="KW-1185">Reference proteome</keyword>
<keyword id="KW-0949">S-adenosyl-L-methionine</keyword>
<keyword id="KW-0808">Transferase</keyword>
<sequence length="261" mass="29268">MWDPDVYLAFSGHRNRPFYELVSRVGLERARRVVDLGCGPGHLTRYLARRWPGAVIEALDSSPEMVAAAAERGIDATTGDLRDWKPKPDTDVVVSNAALHWVPEHSDLLVRWVDELAPGSWIAVQIPGNFETPSHAAVRALARREPYAKLMRDIPFRVGAVVQSPAYYAELLMDTGCKVDVWETTYLHQLTGEHPVLDWITGSALVPVRERLSDESWQQFRQELIPLLNDAYPPRADGSTIFPFRRLFMVAEVGGARRSGG</sequence>
<dbReference type="EC" id="2.1.1.144" evidence="1"/>
<dbReference type="EMBL" id="AE000516">
    <property type="protein sequence ID" value="AAK44531.1"/>
    <property type="molecule type" value="Genomic_DNA"/>
</dbReference>
<dbReference type="PIR" id="D70837">
    <property type="entry name" value="D70837"/>
</dbReference>
<dbReference type="RefSeq" id="WP_003401538.1">
    <property type="nucleotide sequence ID" value="NZ_KK341227.1"/>
</dbReference>
<dbReference type="SMR" id="P9WGA2"/>
<dbReference type="KEGG" id="mtc:MT0307"/>
<dbReference type="PATRIC" id="fig|83331.31.peg.330"/>
<dbReference type="HOGENOM" id="CLU_037990_5_2_11"/>
<dbReference type="Proteomes" id="UP000001020">
    <property type="component" value="Chromosome"/>
</dbReference>
<dbReference type="GO" id="GO:0005737">
    <property type="term" value="C:cytoplasm"/>
    <property type="evidence" value="ECO:0007669"/>
    <property type="project" value="UniProtKB-SubCell"/>
</dbReference>
<dbReference type="GO" id="GO:0030798">
    <property type="term" value="F:trans-aconitate 2-methyltransferase activity"/>
    <property type="evidence" value="ECO:0007669"/>
    <property type="project" value="UniProtKB-UniRule"/>
</dbReference>
<dbReference type="GO" id="GO:0032259">
    <property type="term" value="P:methylation"/>
    <property type="evidence" value="ECO:0007669"/>
    <property type="project" value="UniProtKB-KW"/>
</dbReference>
<dbReference type="CDD" id="cd02440">
    <property type="entry name" value="AdoMet_MTases"/>
    <property type="match status" value="1"/>
</dbReference>
<dbReference type="Gene3D" id="1.10.150.290">
    <property type="entry name" value="S-adenosyl-L-methionine-dependent methyltransferases"/>
    <property type="match status" value="1"/>
</dbReference>
<dbReference type="Gene3D" id="3.40.50.150">
    <property type="entry name" value="Vaccinia Virus protein VP39"/>
    <property type="match status" value="1"/>
</dbReference>
<dbReference type="HAMAP" id="MF_00560">
    <property type="entry name" value="Tran_acon_Me_trans"/>
    <property type="match status" value="1"/>
</dbReference>
<dbReference type="InterPro" id="IPR041698">
    <property type="entry name" value="Methyltransf_25"/>
</dbReference>
<dbReference type="InterPro" id="IPR029063">
    <property type="entry name" value="SAM-dependent_MTases_sf"/>
</dbReference>
<dbReference type="InterPro" id="IPR023506">
    <property type="entry name" value="Trans-aconitate_MeTrfase"/>
</dbReference>
<dbReference type="InterPro" id="IPR023149">
    <property type="entry name" value="Trans_acon_MeTrfase_C"/>
</dbReference>
<dbReference type="NCBIfam" id="NF010703">
    <property type="entry name" value="PRK14103.1"/>
    <property type="match status" value="1"/>
</dbReference>
<dbReference type="PANTHER" id="PTHR43861:SF1">
    <property type="entry name" value="TRANS-ACONITATE 2-METHYLTRANSFERASE"/>
    <property type="match status" value="1"/>
</dbReference>
<dbReference type="PANTHER" id="PTHR43861">
    <property type="entry name" value="TRANS-ACONITATE 2-METHYLTRANSFERASE-RELATED"/>
    <property type="match status" value="1"/>
</dbReference>
<dbReference type="Pfam" id="PF13649">
    <property type="entry name" value="Methyltransf_25"/>
    <property type="match status" value="1"/>
</dbReference>
<dbReference type="SUPFAM" id="SSF53335">
    <property type="entry name" value="S-adenosyl-L-methionine-dependent methyltransferases"/>
    <property type="match status" value="1"/>
</dbReference>
<accession>P9WGA2</accession>
<accession>L0T4Y3</accession>
<accession>O53698</accession>
<accession>P66885</accession>
<proteinExistence type="inferred from homology"/>
<evidence type="ECO:0000255" key="1">
    <source>
        <dbReference type="HAMAP-Rule" id="MF_00560"/>
    </source>
</evidence>
<reference key="1">
    <citation type="journal article" date="2002" name="J. Bacteriol.">
        <title>Whole-genome comparison of Mycobacterium tuberculosis clinical and laboratory strains.</title>
        <authorList>
            <person name="Fleischmann R.D."/>
            <person name="Alland D."/>
            <person name="Eisen J.A."/>
            <person name="Carpenter L."/>
            <person name="White O."/>
            <person name="Peterson J.D."/>
            <person name="DeBoy R.T."/>
            <person name="Dodson R.J."/>
            <person name="Gwinn M.L."/>
            <person name="Haft D.H."/>
            <person name="Hickey E.K."/>
            <person name="Kolonay J.F."/>
            <person name="Nelson W.C."/>
            <person name="Umayam L.A."/>
            <person name="Ermolaeva M.D."/>
            <person name="Salzberg S.L."/>
            <person name="Delcher A."/>
            <person name="Utterback T.R."/>
            <person name="Weidman J.F."/>
            <person name="Khouri H.M."/>
            <person name="Gill J."/>
            <person name="Mikula A."/>
            <person name="Bishai W."/>
            <person name="Jacobs W.R. Jr."/>
            <person name="Venter J.C."/>
            <person name="Fraser C.M."/>
        </authorList>
    </citation>
    <scope>NUCLEOTIDE SEQUENCE [LARGE SCALE GENOMIC DNA]</scope>
    <source>
        <strain>CDC 1551 / Oshkosh</strain>
    </source>
</reference>